<name>ICAM4_MOUSE</name>
<accession>Q9ERM2</accession>
<accession>Q8K4L7</accession>
<accession>Q9CU00</accession>
<sequence>MESALLLPSLLLVAAYPRGGSPQQEWMQSPPAPSVTSAPFWVRLNPELEAVPPGGSAWLNCSHNCPLPVHSSLRTQLRQGKIVNGSGWVSYQLLDVRAWNSKVRCVVTCAGETREATARITAYKRPRSVILEPPVLVGHKYTLRCYVTHVFPVGFLVVSLRRGGRVIYHESLERFTGSDLANVTLTYVMRAGLNDLWQPLTCHARLNLDGLVVRSSSAPVMLTVLALSPASIALASTSIATLVGILLAVGAVYVRKYLAVQT</sequence>
<organism>
    <name type="scientific">Mus musculus</name>
    <name type="common">Mouse</name>
    <dbReference type="NCBI Taxonomy" id="10090"/>
    <lineage>
        <taxon>Eukaryota</taxon>
        <taxon>Metazoa</taxon>
        <taxon>Chordata</taxon>
        <taxon>Craniata</taxon>
        <taxon>Vertebrata</taxon>
        <taxon>Euteleostomi</taxon>
        <taxon>Mammalia</taxon>
        <taxon>Eutheria</taxon>
        <taxon>Euarchontoglires</taxon>
        <taxon>Glires</taxon>
        <taxon>Rodentia</taxon>
        <taxon>Myomorpha</taxon>
        <taxon>Muroidea</taxon>
        <taxon>Muridae</taxon>
        <taxon>Murinae</taxon>
        <taxon>Mus</taxon>
        <taxon>Mus</taxon>
    </lineage>
</organism>
<gene>
    <name type="primary">Icam4</name>
</gene>
<dbReference type="EMBL" id="AF296282">
    <property type="protein sequence ID" value="AAG30953.1"/>
    <property type="molecule type" value="mRNA"/>
</dbReference>
<dbReference type="EMBL" id="AF296283">
    <property type="protein sequence ID" value="AAM97787.1"/>
    <property type="molecule type" value="mRNA"/>
</dbReference>
<dbReference type="EMBL" id="AK019013">
    <property type="protein sequence ID" value="BAB31510.1"/>
    <property type="molecule type" value="mRNA"/>
</dbReference>
<dbReference type="CCDS" id="CCDS22890.1">
    <molecule id="Q9ERM2-1"/>
</dbReference>
<dbReference type="CCDS" id="CCDS90509.1">
    <molecule id="Q9ERM2-2"/>
</dbReference>
<dbReference type="RefSeq" id="NP_001351438.1">
    <molecule id="Q9ERM2-2"/>
    <property type="nucleotide sequence ID" value="NM_001364509.1"/>
</dbReference>
<dbReference type="RefSeq" id="NP_076381.1">
    <molecule id="Q9ERM2-1"/>
    <property type="nucleotide sequence ID" value="NM_023892.3"/>
</dbReference>
<dbReference type="SMR" id="Q9ERM2"/>
<dbReference type="CORUM" id="Q9ERM2"/>
<dbReference type="FunCoup" id="Q9ERM2">
    <property type="interactions" value="60"/>
</dbReference>
<dbReference type="STRING" id="10090.ENSMUSP00000001040"/>
<dbReference type="GlyCosmos" id="Q9ERM2">
    <property type="glycosylation" value="3 sites, No reported glycans"/>
</dbReference>
<dbReference type="GlyGen" id="Q9ERM2">
    <property type="glycosylation" value="3 sites"/>
</dbReference>
<dbReference type="PaxDb" id="10090-ENSMUSP00000001040"/>
<dbReference type="ProteomicsDB" id="267084">
    <molecule id="Q9ERM2-1"/>
</dbReference>
<dbReference type="ProteomicsDB" id="267085">
    <molecule id="Q9ERM2-2"/>
</dbReference>
<dbReference type="TopDownProteomics" id="Q9ERM2-1">
    <molecule id="Q9ERM2-1"/>
</dbReference>
<dbReference type="Antibodypedia" id="25271">
    <property type="antibodies" value="266 antibodies from 29 providers"/>
</dbReference>
<dbReference type="DNASU" id="78369"/>
<dbReference type="Ensembl" id="ENSMUST00000001040.7">
    <molecule id="Q9ERM2-1"/>
    <property type="protein sequence ID" value="ENSMUSP00000001040.6"/>
    <property type="gene ID" value="ENSMUSG00000001014.7"/>
</dbReference>
<dbReference type="Ensembl" id="ENSMUST00000215077.2">
    <molecule id="Q9ERM2-2"/>
    <property type="protein sequence ID" value="ENSMUSP00000151013.2"/>
    <property type="gene ID" value="ENSMUSG00000001014.7"/>
</dbReference>
<dbReference type="GeneID" id="78369"/>
<dbReference type="KEGG" id="mmu:78369"/>
<dbReference type="UCSC" id="uc009ojy.1">
    <molecule id="Q9ERM2-2"/>
    <property type="organism name" value="mouse"/>
</dbReference>
<dbReference type="UCSC" id="uc009ojz.1">
    <molecule id="Q9ERM2-1"/>
    <property type="organism name" value="mouse"/>
</dbReference>
<dbReference type="AGR" id="MGI:1925619"/>
<dbReference type="CTD" id="3386"/>
<dbReference type="MGI" id="MGI:1925619">
    <property type="gene designation" value="Icam4"/>
</dbReference>
<dbReference type="VEuPathDB" id="HostDB:ENSMUSG00000001014"/>
<dbReference type="eggNOG" id="ENOG502TF7V">
    <property type="taxonomic scope" value="Eukaryota"/>
</dbReference>
<dbReference type="GeneTree" id="ENSGT00940000162431"/>
<dbReference type="HOGENOM" id="CLU_1165526_0_0_1"/>
<dbReference type="InParanoid" id="Q9ERM2"/>
<dbReference type="OMA" id="QPVICHT"/>
<dbReference type="OrthoDB" id="10012075at2759"/>
<dbReference type="PhylomeDB" id="Q9ERM2"/>
<dbReference type="TreeFam" id="TF333745"/>
<dbReference type="Reactome" id="R-MMU-198933">
    <property type="pathway name" value="Immunoregulatory interactions between a Lymphoid and a non-Lymphoid cell"/>
</dbReference>
<dbReference type="Reactome" id="R-MMU-216083">
    <property type="pathway name" value="Integrin cell surface interactions"/>
</dbReference>
<dbReference type="BioGRID-ORCS" id="78369">
    <property type="hits" value="2 hits in 79 CRISPR screens"/>
</dbReference>
<dbReference type="PRO" id="PR:Q9ERM2"/>
<dbReference type="Proteomes" id="UP000000589">
    <property type="component" value="Chromosome 9"/>
</dbReference>
<dbReference type="RNAct" id="Q9ERM2">
    <property type="molecule type" value="protein"/>
</dbReference>
<dbReference type="Bgee" id="ENSMUSG00000001014">
    <property type="expression patterns" value="Expressed in fetal liver hematopoietic progenitor cell and 57 other cell types or tissues"/>
</dbReference>
<dbReference type="ExpressionAtlas" id="Q9ERM2">
    <property type="expression patterns" value="baseline and differential"/>
</dbReference>
<dbReference type="GO" id="GO:0005737">
    <property type="term" value="C:cytoplasm"/>
    <property type="evidence" value="ECO:0000314"/>
    <property type="project" value="MGI"/>
</dbReference>
<dbReference type="GO" id="GO:0005576">
    <property type="term" value="C:extracellular region"/>
    <property type="evidence" value="ECO:0007669"/>
    <property type="project" value="UniProtKB-SubCell"/>
</dbReference>
<dbReference type="GO" id="GO:0005615">
    <property type="term" value="C:extracellular space"/>
    <property type="evidence" value="ECO:0000314"/>
    <property type="project" value="MGI"/>
</dbReference>
<dbReference type="GO" id="GO:0005886">
    <property type="term" value="C:plasma membrane"/>
    <property type="evidence" value="ECO:0000314"/>
    <property type="project" value="MGI"/>
</dbReference>
<dbReference type="GO" id="GO:0005178">
    <property type="term" value="F:integrin binding"/>
    <property type="evidence" value="ECO:0007669"/>
    <property type="project" value="InterPro"/>
</dbReference>
<dbReference type="GO" id="GO:0098609">
    <property type="term" value="P:cell-cell adhesion"/>
    <property type="evidence" value="ECO:0007669"/>
    <property type="project" value="InterPro"/>
</dbReference>
<dbReference type="FunFam" id="2.60.40.10:FF:000194">
    <property type="entry name" value="Intercellular adhesion molecule 1"/>
    <property type="match status" value="1"/>
</dbReference>
<dbReference type="FunFam" id="2.60.40.10:FF:001426">
    <property type="entry name" value="Intercellular adhesion molecule 4"/>
    <property type="match status" value="1"/>
</dbReference>
<dbReference type="Gene3D" id="2.60.40.10">
    <property type="entry name" value="Immunoglobulins"/>
    <property type="match status" value="2"/>
</dbReference>
<dbReference type="InterPro" id="IPR013768">
    <property type="entry name" value="ICAM_N"/>
</dbReference>
<dbReference type="InterPro" id="IPR047012">
    <property type="entry name" value="ICAM_VCAM"/>
</dbReference>
<dbReference type="InterPro" id="IPR003987">
    <property type="entry name" value="ICAM_VCAM_N"/>
</dbReference>
<dbReference type="InterPro" id="IPR036179">
    <property type="entry name" value="Ig-like_dom_sf"/>
</dbReference>
<dbReference type="InterPro" id="IPR013783">
    <property type="entry name" value="Ig-like_fold"/>
</dbReference>
<dbReference type="PANTHER" id="PTHR13771">
    <property type="entry name" value="INTERCELLULAR ADHESION MOLECULE"/>
    <property type="match status" value="1"/>
</dbReference>
<dbReference type="PANTHER" id="PTHR13771:SF8">
    <property type="entry name" value="INTERCELLULAR ADHESION MOLECULE 4"/>
    <property type="match status" value="1"/>
</dbReference>
<dbReference type="Pfam" id="PF03921">
    <property type="entry name" value="ICAM_N"/>
    <property type="match status" value="1"/>
</dbReference>
<dbReference type="PRINTS" id="PR01472">
    <property type="entry name" value="ICAMVCAM1"/>
</dbReference>
<dbReference type="SUPFAM" id="SSF48726">
    <property type="entry name" value="Immunoglobulin"/>
    <property type="match status" value="2"/>
</dbReference>
<protein>
    <recommendedName>
        <fullName>Intercellular adhesion molecule 4</fullName>
        <shortName>ICAM-4</shortName>
    </recommendedName>
    <cdAntigenName>CD242</cdAntigenName>
</protein>
<keyword id="KW-0025">Alternative splicing</keyword>
<keyword id="KW-0130">Cell adhesion</keyword>
<keyword id="KW-1003">Cell membrane</keyword>
<keyword id="KW-1015">Disulfide bond</keyword>
<keyword id="KW-0325">Glycoprotein</keyword>
<keyword id="KW-0393">Immunoglobulin domain</keyword>
<keyword id="KW-0472">Membrane</keyword>
<keyword id="KW-1185">Reference proteome</keyword>
<keyword id="KW-0677">Repeat</keyword>
<keyword id="KW-0964">Secreted</keyword>
<keyword id="KW-0732">Signal</keyword>
<keyword id="KW-0812">Transmembrane</keyword>
<keyword id="KW-1133">Transmembrane helix</keyword>
<evidence type="ECO:0000250" key="1"/>
<evidence type="ECO:0000250" key="2">
    <source>
        <dbReference type="UniProtKB" id="P32942"/>
    </source>
</evidence>
<evidence type="ECO:0000255" key="3"/>
<evidence type="ECO:0000255" key="4">
    <source>
        <dbReference type="PROSITE-ProRule" id="PRU00114"/>
    </source>
</evidence>
<evidence type="ECO:0000269" key="5">
    <source>
    </source>
</evidence>
<evidence type="ECO:0000303" key="6">
    <source>
    </source>
</evidence>
<evidence type="ECO:0000305" key="7"/>
<feature type="signal peptide" evidence="3">
    <location>
        <begin position="1"/>
        <end position="22"/>
    </location>
</feature>
<feature type="chain" id="PRO_0000014797" description="Intercellular adhesion molecule 4">
    <location>
        <begin position="23"/>
        <end position="262"/>
    </location>
</feature>
<feature type="topological domain" description="Extracellular" evidence="3">
    <location>
        <begin position="23"/>
        <end position="231"/>
    </location>
</feature>
<feature type="transmembrane region" description="Helical" evidence="3">
    <location>
        <begin position="232"/>
        <end position="252"/>
    </location>
</feature>
<feature type="topological domain" description="Cytoplasmic" evidence="3">
    <location>
        <begin position="253"/>
        <end position="262"/>
    </location>
</feature>
<feature type="domain" description="Ig-like C2-type 1">
    <location>
        <begin position="54"/>
        <end position="116"/>
    </location>
</feature>
<feature type="domain" description="Ig-like C2-type 2">
    <location>
        <begin position="138"/>
        <end position="209"/>
    </location>
</feature>
<feature type="glycosylation site" description="N-linked (GlcNAc...) asparagine" evidence="3">
    <location>
        <position position="60"/>
    </location>
</feature>
<feature type="glycosylation site" description="N-linked (GlcNAc...) asparagine" evidence="3">
    <location>
        <position position="84"/>
    </location>
</feature>
<feature type="glycosylation site" description="N-linked (GlcNAc...) asparagine" evidence="3">
    <location>
        <position position="182"/>
    </location>
</feature>
<feature type="disulfide bond" evidence="1">
    <location>
        <begin position="61"/>
        <end position="109"/>
    </location>
</feature>
<feature type="disulfide bond" evidence="2 4">
    <location>
        <begin position="61"/>
        <end position="105"/>
    </location>
</feature>
<feature type="disulfide bond" evidence="2">
    <location>
        <begin position="65"/>
        <end position="109"/>
    </location>
</feature>
<feature type="disulfide bond" evidence="1">
    <location>
        <begin position="145"/>
        <end position="202"/>
    </location>
</feature>
<feature type="splice variant" id="VSP_013464" description="In isoform 2." evidence="6">
    <original>ALSPASIALASTSIATLVGILLAVGAVYVRKYLAVQT</original>
    <variation>GEASCNPREWVRERGCCHSKGACRTGVGSTLGGPQTS</variation>
    <location>
        <begin position="226"/>
        <end position="262"/>
    </location>
</feature>
<reference key="1">
    <citation type="journal article" date="2003" name="Blood">
        <title>Novel secreted isoform of adhesion molecule ICAM-4: potential regulator of membrane-associated ICAM-4 interactions.</title>
        <authorList>
            <person name="Lee G."/>
            <person name="Spring F.A."/>
            <person name="Parsons S.F."/>
            <person name="Mankelow T.J."/>
            <person name="Peters L.L."/>
            <person name="Koury M.J."/>
            <person name="Mohandas N."/>
            <person name="Anstee D.J."/>
            <person name="Chasis J.A."/>
        </authorList>
    </citation>
    <scope>NUCLEOTIDE SEQUENCE [MRNA] (ISOFORMS 1 AND 2)</scope>
    <scope>FUNCTION</scope>
    <scope>SUBCELLULAR LOCATION</scope>
    <source>
        <tissue>Spleen</tissue>
    </source>
</reference>
<reference key="2">
    <citation type="journal article" date="2005" name="Science">
        <title>The transcriptional landscape of the mammalian genome.</title>
        <authorList>
            <person name="Carninci P."/>
            <person name="Kasukawa T."/>
            <person name="Katayama S."/>
            <person name="Gough J."/>
            <person name="Frith M.C."/>
            <person name="Maeda N."/>
            <person name="Oyama R."/>
            <person name="Ravasi T."/>
            <person name="Lenhard B."/>
            <person name="Wells C."/>
            <person name="Kodzius R."/>
            <person name="Shimokawa K."/>
            <person name="Bajic V.B."/>
            <person name="Brenner S.E."/>
            <person name="Batalov S."/>
            <person name="Forrest A.R."/>
            <person name="Zavolan M."/>
            <person name="Davis M.J."/>
            <person name="Wilming L.G."/>
            <person name="Aidinis V."/>
            <person name="Allen J.E."/>
            <person name="Ambesi-Impiombato A."/>
            <person name="Apweiler R."/>
            <person name="Aturaliya R.N."/>
            <person name="Bailey T.L."/>
            <person name="Bansal M."/>
            <person name="Baxter L."/>
            <person name="Beisel K.W."/>
            <person name="Bersano T."/>
            <person name="Bono H."/>
            <person name="Chalk A.M."/>
            <person name="Chiu K.P."/>
            <person name="Choudhary V."/>
            <person name="Christoffels A."/>
            <person name="Clutterbuck D.R."/>
            <person name="Crowe M.L."/>
            <person name="Dalla E."/>
            <person name="Dalrymple B.P."/>
            <person name="de Bono B."/>
            <person name="Della Gatta G."/>
            <person name="di Bernardo D."/>
            <person name="Down T."/>
            <person name="Engstrom P."/>
            <person name="Fagiolini M."/>
            <person name="Faulkner G."/>
            <person name="Fletcher C.F."/>
            <person name="Fukushima T."/>
            <person name="Furuno M."/>
            <person name="Futaki S."/>
            <person name="Gariboldi M."/>
            <person name="Georgii-Hemming P."/>
            <person name="Gingeras T.R."/>
            <person name="Gojobori T."/>
            <person name="Green R.E."/>
            <person name="Gustincich S."/>
            <person name="Harbers M."/>
            <person name="Hayashi Y."/>
            <person name="Hensch T.K."/>
            <person name="Hirokawa N."/>
            <person name="Hill D."/>
            <person name="Huminiecki L."/>
            <person name="Iacono M."/>
            <person name="Ikeo K."/>
            <person name="Iwama A."/>
            <person name="Ishikawa T."/>
            <person name="Jakt M."/>
            <person name="Kanapin A."/>
            <person name="Katoh M."/>
            <person name="Kawasawa Y."/>
            <person name="Kelso J."/>
            <person name="Kitamura H."/>
            <person name="Kitano H."/>
            <person name="Kollias G."/>
            <person name="Krishnan S.P."/>
            <person name="Kruger A."/>
            <person name="Kummerfeld S.K."/>
            <person name="Kurochkin I.V."/>
            <person name="Lareau L.F."/>
            <person name="Lazarevic D."/>
            <person name="Lipovich L."/>
            <person name="Liu J."/>
            <person name="Liuni S."/>
            <person name="McWilliam S."/>
            <person name="Madan Babu M."/>
            <person name="Madera M."/>
            <person name="Marchionni L."/>
            <person name="Matsuda H."/>
            <person name="Matsuzawa S."/>
            <person name="Miki H."/>
            <person name="Mignone F."/>
            <person name="Miyake S."/>
            <person name="Morris K."/>
            <person name="Mottagui-Tabar S."/>
            <person name="Mulder N."/>
            <person name="Nakano N."/>
            <person name="Nakauchi H."/>
            <person name="Ng P."/>
            <person name="Nilsson R."/>
            <person name="Nishiguchi S."/>
            <person name="Nishikawa S."/>
            <person name="Nori F."/>
            <person name="Ohara O."/>
            <person name="Okazaki Y."/>
            <person name="Orlando V."/>
            <person name="Pang K.C."/>
            <person name="Pavan W.J."/>
            <person name="Pavesi G."/>
            <person name="Pesole G."/>
            <person name="Petrovsky N."/>
            <person name="Piazza S."/>
            <person name="Reed J."/>
            <person name="Reid J.F."/>
            <person name="Ring B.Z."/>
            <person name="Ringwald M."/>
            <person name="Rost B."/>
            <person name="Ruan Y."/>
            <person name="Salzberg S.L."/>
            <person name="Sandelin A."/>
            <person name="Schneider C."/>
            <person name="Schoenbach C."/>
            <person name="Sekiguchi K."/>
            <person name="Semple C.A."/>
            <person name="Seno S."/>
            <person name="Sessa L."/>
            <person name="Sheng Y."/>
            <person name="Shibata Y."/>
            <person name="Shimada H."/>
            <person name="Shimada K."/>
            <person name="Silva D."/>
            <person name="Sinclair B."/>
            <person name="Sperling S."/>
            <person name="Stupka E."/>
            <person name="Sugiura K."/>
            <person name="Sultana R."/>
            <person name="Takenaka Y."/>
            <person name="Taki K."/>
            <person name="Tammoja K."/>
            <person name="Tan S.L."/>
            <person name="Tang S."/>
            <person name="Taylor M.S."/>
            <person name="Tegner J."/>
            <person name="Teichmann S.A."/>
            <person name="Ueda H.R."/>
            <person name="van Nimwegen E."/>
            <person name="Verardo R."/>
            <person name="Wei C.L."/>
            <person name="Yagi K."/>
            <person name="Yamanishi H."/>
            <person name="Zabarovsky E."/>
            <person name="Zhu S."/>
            <person name="Zimmer A."/>
            <person name="Hide W."/>
            <person name="Bult C."/>
            <person name="Grimmond S.M."/>
            <person name="Teasdale R.D."/>
            <person name="Liu E.T."/>
            <person name="Brusic V."/>
            <person name="Quackenbush J."/>
            <person name="Wahlestedt C."/>
            <person name="Mattick J.S."/>
            <person name="Hume D.A."/>
            <person name="Kai C."/>
            <person name="Sasaki D."/>
            <person name="Tomaru Y."/>
            <person name="Fukuda S."/>
            <person name="Kanamori-Katayama M."/>
            <person name="Suzuki M."/>
            <person name="Aoki J."/>
            <person name="Arakawa T."/>
            <person name="Iida J."/>
            <person name="Imamura K."/>
            <person name="Itoh M."/>
            <person name="Kato T."/>
            <person name="Kawaji H."/>
            <person name="Kawagashira N."/>
            <person name="Kawashima T."/>
            <person name="Kojima M."/>
            <person name="Kondo S."/>
            <person name="Konno H."/>
            <person name="Nakano K."/>
            <person name="Ninomiya N."/>
            <person name="Nishio T."/>
            <person name="Okada M."/>
            <person name="Plessy C."/>
            <person name="Shibata K."/>
            <person name="Shiraki T."/>
            <person name="Suzuki S."/>
            <person name="Tagami M."/>
            <person name="Waki K."/>
            <person name="Watahiki A."/>
            <person name="Okamura-Oho Y."/>
            <person name="Suzuki H."/>
            <person name="Kawai J."/>
            <person name="Hayashizaki Y."/>
        </authorList>
    </citation>
    <scope>NUCLEOTIDE SEQUENCE [LARGE SCALE MRNA] OF 74-262 (ISOFORM 1)</scope>
    <source>
        <strain>C57BL/6J</strain>
        <tissue>Pancreas</tissue>
    </source>
</reference>
<proteinExistence type="evidence at transcript level"/>
<comment type="function">
    <text evidence="1 5">Adhesion molecule that binds to leukocyte adhesion LFA-1 protein LFA-1 (integrin alpha-L/beta-2). ICAM4 is also a ligand for alpha-4/beta-1 and alpha-V integrins (By similarity). Isoform 2 may modulate binding of membrane-associated ICAM4.</text>
</comment>
<comment type="subcellular location">
    <molecule>Isoform 1</molecule>
    <subcellularLocation>
        <location evidence="5">Cell membrane</location>
        <topology evidence="3">Single-pass type I membrane protein</topology>
    </subcellularLocation>
</comment>
<comment type="subcellular location">
    <molecule>Isoform 2</molecule>
    <subcellularLocation>
        <location evidence="5">Secreted</location>
    </subcellularLocation>
</comment>
<comment type="alternative products">
    <event type="alternative splicing"/>
    <isoform>
        <id>Q9ERM2-1</id>
        <name>1</name>
        <sequence type="displayed"/>
    </isoform>
    <isoform>
        <id>Q9ERM2-2</id>
        <name>2</name>
        <name>ICAM-4S</name>
        <sequence type="described" ref="VSP_013464"/>
    </isoform>
</comment>
<comment type="similarity">
    <text evidence="7">Belongs to the immunoglobulin superfamily. ICAM family.</text>
</comment>